<proteinExistence type="inferred from homology"/>
<feature type="chain" id="PRO_0000111038" description="Oligoribonuclease">
    <location>
        <begin position="1"/>
        <end position="183"/>
    </location>
</feature>
<feature type="domain" description="Exonuclease" evidence="1">
    <location>
        <begin position="9"/>
        <end position="172"/>
    </location>
</feature>
<feature type="active site" evidence="1">
    <location>
        <position position="130"/>
    </location>
</feature>
<name>ORN_HAEDU</name>
<dbReference type="EC" id="3.1.15.-" evidence="1"/>
<dbReference type="EMBL" id="AE017143">
    <property type="protein sequence ID" value="AAP95414.1"/>
    <property type="molecule type" value="Genomic_DNA"/>
</dbReference>
<dbReference type="RefSeq" id="WP_010944467.1">
    <property type="nucleotide sequence ID" value="NC_002940.2"/>
</dbReference>
<dbReference type="SMR" id="Q7VNN8"/>
<dbReference type="STRING" id="233412.HD_0452"/>
<dbReference type="KEGG" id="hdu:HD_0452"/>
<dbReference type="eggNOG" id="COG1949">
    <property type="taxonomic scope" value="Bacteria"/>
</dbReference>
<dbReference type="HOGENOM" id="CLU_064761_2_0_6"/>
<dbReference type="OrthoDB" id="9801329at2"/>
<dbReference type="Proteomes" id="UP000001022">
    <property type="component" value="Chromosome"/>
</dbReference>
<dbReference type="GO" id="GO:0005737">
    <property type="term" value="C:cytoplasm"/>
    <property type="evidence" value="ECO:0007669"/>
    <property type="project" value="UniProtKB-SubCell"/>
</dbReference>
<dbReference type="GO" id="GO:0000175">
    <property type="term" value="F:3'-5'-RNA exonuclease activity"/>
    <property type="evidence" value="ECO:0007669"/>
    <property type="project" value="InterPro"/>
</dbReference>
<dbReference type="GO" id="GO:0003676">
    <property type="term" value="F:nucleic acid binding"/>
    <property type="evidence" value="ECO:0007669"/>
    <property type="project" value="InterPro"/>
</dbReference>
<dbReference type="GO" id="GO:0006259">
    <property type="term" value="P:DNA metabolic process"/>
    <property type="evidence" value="ECO:0007669"/>
    <property type="project" value="UniProtKB-ARBA"/>
</dbReference>
<dbReference type="CDD" id="cd06135">
    <property type="entry name" value="Orn"/>
    <property type="match status" value="1"/>
</dbReference>
<dbReference type="FunFam" id="3.30.420.10:FF:000003">
    <property type="entry name" value="Oligoribonuclease"/>
    <property type="match status" value="1"/>
</dbReference>
<dbReference type="Gene3D" id="3.30.420.10">
    <property type="entry name" value="Ribonuclease H-like superfamily/Ribonuclease H"/>
    <property type="match status" value="1"/>
</dbReference>
<dbReference type="HAMAP" id="MF_00045">
    <property type="entry name" value="Oligoribonuclease"/>
    <property type="match status" value="1"/>
</dbReference>
<dbReference type="InterPro" id="IPR013520">
    <property type="entry name" value="Exonuclease_RNaseT/DNA_pol3"/>
</dbReference>
<dbReference type="InterPro" id="IPR022894">
    <property type="entry name" value="Oligoribonuclease"/>
</dbReference>
<dbReference type="InterPro" id="IPR012337">
    <property type="entry name" value="RNaseH-like_sf"/>
</dbReference>
<dbReference type="InterPro" id="IPR036397">
    <property type="entry name" value="RNaseH_sf"/>
</dbReference>
<dbReference type="NCBIfam" id="NF003765">
    <property type="entry name" value="PRK05359.1"/>
    <property type="match status" value="1"/>
</dbReference>
<dbReference type="PANTHER" id="PTHR11046">
    <property type="entry name" value="OLIGORIBONUCLEASE, MITOCHONDRIAL"/>
    <property type="match status" value="1"/>
</dbReference>
<dbReference type="PANTHER" id="PTHR11046:SF0">
    <property type="entry name" value="OLIGORIBONUCLEASE, MITOCHONDRIAL"/>
    <property type="match status" value="1"/>
</dbReference>
<dbReference type="Pfam" id="PF00929">
    <property type="entry name" value="RNase_T"/>
    <property type="match status" value="1"/>
</dbReference>
<dbReference type="SMART" id="SM00479">
    <property type="entry name" value="EXOIII"/>
    <property type="match status" value="1"/>
</dbReference>
<dbReference type="SUPFAM" id="SSF53098">
    <property type="entry name" value="Ribonuclease H-like"/>
    <property type="match status" value="1"/>
</dbReference>
<protein>
    <recommendedName>
        <fullName evidence="1">Oligoribonuclease</fullName>
        <ecNumber evidence="1">3.1.15.-</ecNumber>
    </recommendedName>
</protein>
<organism>
    <name type="scientific">Haemophilus ducreyi (strain 35000HP / ATCC 700724)</name>
    <dbReference type="NCBI Taxonomy" id="233412"/>
    <lineage>
        <taxon>Bacteria</taxon>
        <taxon>Pseudomonadati</taxon>
        <taxon>Pseudomonadota</taxon>
        <taxon>Gammaproteobacteria</taxon>
        <taxon>Pasteurellales</taxon>
        <taxon>Pasteurellaceae</taxon>
        <taxon>Haemophilus</taxon>
    </lineage>
</organism>
<sequence length="183" mass="21388">MNKLANQHLIWIDLEMTGLDPNQDRIIEIATIVTDKDLNILAKGPVLAVHQPNTLLSKMNEWCIKTHTANGLIERVKQSKLTERAAELQTLDFLKQWVMKGSSPICGNSVAQDKRFLYQYMPDLADYFHYRHLDVSTLKELARRWKPEILQQFSKKNSHLALDDIRESIEELKFYREHFIKLA</sequence>
<gene>
    <name evidence="1" type="primary">orn</name>
    <name type="ordered locus">HD_0452</name>
</gene>
<keyword id="KW-0963">Cytoplasm</keyword>
<keyword id="KW-0269">Exonuclease</keyword>
<keyword id="KW-0378">Hydrolase</keyword>
<keyword id="KW-0540">Nuclease</keyword>
<keyword id="KW-1185">Reference proteome</keyword>
<comment type="function">
    <text evidence="1">3'-to-5' exoribonuclease specific for small oligoribonucleotides.</text>
</comment>
<comment type="subcellular location">
    <subcellularLocation>
        <location evidence="1">Cytoplasm</location>
    </subcellularLocation>
</comment>
<comment type="similarity">
    <text evidence="1">Belongs to the oligoribonuclease family.</text>
</comment>
<evidence type="ECO:0000255" key="1">
    <source>
        <dbReference type="HAMAP-Rule" id="MF_00045"/>
    </source>
</evidence>
<accession>Q7VNN8</accession>
<reference key="1">
    <citation type="submission" date="2003-06" db="EMBL/GenBank/DDBJ databases">
        <title>The complete genome sequence of Haemophilus ducreyi.</title>
        <authorList>
            <person name="Munson R.S. Jr."/>
            <person name="Ray W.C."/>
            <person name="Mahairas G."/>
            <person name="Sabo P."/>
            <person name="Mungur R."/>
            <person name="Johnson L."/>
            <person name="Nguyen D."/>
            <person name="Wang J."/>
            <person name="Forst C."/>
            <person name="Hood L."/>
        </authorList>
    </citation>
    <scope>NUCLEOTIDE SEQUENCE [LARGE SCALE GENOMIC DNA]</scope>
    <source>
        <strain>35000HP / ATCC 700724</strain>
    </source>
</reference>